<comment type="function">
    <text>Ras proteins bind GDP/GTP and possess intrinsic GTPase activity.</text>
</comment>
<comment type="catalytic activity">
    <reaction evidence="2">
        <text>GTP + H2O = GDP + phosphate + H(+)</text>
        <dbReference type="Rhea" id="RHEA:19669"/>
        <dbReference type="ChEBI" id="CHEBI:15377"/>
        <dbReference type="ChEBI" id="CHEBI:15378"/>
        <dbReference type="ChEBI" id="CHEBI:37565"/>
        <dbReference type="ChEBI" id="CHEBI:43474"/>
        <dbReference type="ChEBI" id="CHEBI:58189"/>
        <dbReference type="EC" id="3.6.5.2"/>
    </reaction>
</comment>
<comment type="subcellular location">
    <subcellularLocation>
        <location evidence="3">Cell membrane</location>
        <topology evidence="3">Lipid-anchor</topology>
        <orientation evidence="3">Cytoplasmic side</orientation>
    </subcellularLocation>
</comment>
<comment type="similarity">
    <text evidence="3">Belongs to the small GTPase superfamily. Ras family.</text>
</comment>
<proteinExistence type="evidence at transcript level"/>
<name>RAS1_NEUCR</name>
<feature type="chain" id="PRO_0000082704" description="Protein ras-1">
    <location>
        <begin position="1"/>
        <end position="210"/>
    </location>
</feature>
<feature type="propeptide" id="PRO_0000281358" description="Removed in mature form" evidence="1">
    <location>
        <begin position="211"/>
        <end position="213"/>
    </location>
</feature>
<feature type="short sequence motif" description="Effector region" evidence="3">
    <location>
        <begin position="37"/>
        <end position="45"/>
    </location>
</feature>
<feature type="binding site" evidence="1">
    <location>
        <begin position="15"/>
        <end position="22"/>
    </location>
    <ligand>
        <name>GTP</name>
        <dbReference type="ChEBI" id="CHEBI:37565"/>
    </ligand>
</feature>
<feature type="binding site" evidence="1">
    <location>
        <begin position="62"/>
        <end position="66"/>
    </location>
    <ligand>
        <name>GTP</name>
        <dbReference type="ChEBI" id="CHEBI:37565"/>
    </ligand>
</feature>
<feature type="binding site" evidence="1">
    <location>
        <begin position="121"/>
        <end position="124"/>
    </location>
    <ligand>
        <name>GTP</name>
        <dbReference type="ChEBI" id="CHEBI:37565"/>
    </ligand>
</feature>
<feature type="modified residue" description="Cysteine methyl ester" evidence="1">
    <location>
        <position position="210"/>
    </location>
</feature>
<feature type="lipid moiety-binding region" description="S-farnesyl cysteine" evidence="1">
    <location>
        <position position="210"/>
    </location>
</feature>
<keyword id="KW-1003">Cell membrane</keyword>
<keyword id="KW-0342">GTP-binding</keyword>
<keyword id="KW-0378">Hydrolase</keyword>
<keyword id="KW-0449">Lipoprotein</keyword>
<keyword id="KW-0472">Membrane</keyword>
<keyword id="KW-0488">Methylation</keyword>
<keyword id="KW-0547">Nucleotide-binding</keyword>
<keyword id="KW-0636">Prenylation</keyword>
<keyword id="KW-1185">Reference proteome</keyword>
<evidence type="ECO:0000250" key="1"/>
<evidence type="ECO:0000250" key="2">
    <source>
        <dbReference type="UniProtKB" id="P01112"/>
    </source>
</evidence>
<evidence type="ECO:0000305" key="3"/>
<accession>P22126</accession>
<accession>Q7RVX3</accession>
<reference key="1">
    <citation type="journal article" date="1990" name="FEBS Lett.">
        <title>Neurospora crassa cDNA clones coding for a new member of the ras protein family.</title>
        <authorList>
            <person name="Altschuler D.L."/>
            <person name="Muro A."/>
            <person name="Schijman A."/>
            <person name="Almonacid F.B."/>
            <person name="Torres H.N."/>
        </authorList>
    </citation>
    <scope>NUCLEOTIDE SEQUENCE [MRNA]</scope>
    <source>
        <strain>74-ORS-6a / FGSC 4200</strain>
    </source>
</reference>
<reference key="2">
    <citation type="submission" date="1998-08" db="EMBL/GenBank/DDBJ databases">
        <title>Analyses of structure and function of NC-ras gene of Neurospora crassa.</title>
        <authorList>
            <person name="Ito S."/>
            <person name="Sugisaki M."/>
            <person name="Inoue H."/>
        </authorList>
    </citation>
    <scope>NUCLEOTIDE SEQUENCE [GENOMIC DNA]</scope>
</reference>
<reference key="3">
    <citation type="journal article" date="2003" name="Nature">
        <title>The genome sequence of the filamentous fungus Neurospora crassa.</title>
        <authorList>
            <person name="Galagan J.E."/>
            <person name="Calvo S.E."/>
            <person name="Borkovich K.A."/>
            <person name="Selker E.U."/>
            <person name="Read N.D."/>
            <person name="Jaffe D.B."/>
            <person name="FitzHugh W."/>
            <person name="Ma L.-J."/>
            <person name="Smirnov S."/>
            <person name="Purcell S."/>
            <person name="Rehman B."/>
            <person name="Elkins T."/>
            <person name="Engels R."/>
            <person name="Wang S."/>
            <person name="Nielsen C.B."/>
            <person name="Butler J."/>
            <person name="Endrizzi M."/>
            <person name="Qui D."/>
            <person name="Ianakiev P."/>
            <person name="Bell-Pedersen D."/>
            <person name="Nelson M.A."/>
            <person name="Werner-Washburne M."/>
            <person name="Selitrennikoff C.P."/>
            <person name="Kinsey J.A."/>
            <person name="Braun E.L."/>
            <person name="Zelter A."/>
            <person name="Schulte U."/>
            <person name="Kothe G.O."/>
            <person name="Jedd G."/>
            <person name="Mewes H.-W."/>
            <person name="Staben C."/>
            <person name="Marcotte E."/>
            <person name="Greenberg D."/>
            <person name="Roy A."/>
            <person name="Foley K."/>
            <person name="Naylor J."/>
            <person name="Stange-Thomann N."/>
            <person name="Barrett R."/>
            <person name="Gnerre S."/>
            <person name="Kamal M."/>
            <person name="Kamvysselis M."/>
            <person name="Mauceli E.W."/>
            <person name="Bielke C."/>
            <person name="Rudd S."/>
            <person name="Frishman D."/>
            <person name="Krystofova S."/>
            <person name="Rasmussen C."/>
            <person name="Metzenberg R.L."/>
            <person name="Perkins D.D."/>
            <person name="Kroken S."/>
            <person name="Cogoni C."/>
            <person name="Macino G."/>
            <person name="Catcheside D.E.A."/>
            <person name="Li W."/>
            <person name="Pratt R.J."/>
            <person name="Osmani S.A."/>
            <person name="DeSouza C.P.C."/>
            <person name="Glass N.L."/>
            <person name="Orbach M.J."/>
            <person name="Berglund J.A."/>
            <person name="Voelker R."/>
            <person name="Yarden O."/>
            <person name="Plamann M."/>
            <person name="Seiler S."/>
            <person name="Dunlap J.C."/>
            <person name="Radford A."/>
            <person name="Aramayo R."/>
            <person name="Natvig D.O."/>
            <person name="Alex L.A."/>
            <person name="Mannhaupt G."/>
            <person name="Ebbole D.J."/>
            <person name="Freitag M."/>
            <person name="Paulsen I."/>
            <person name="Sachs M.S."/>
            <person name="Lander E.S."/>
            <person name="Nusbaum C."/>
            <person name="Birren B.W."/>
        </authorList>
    </citation>
    <scope>NUCLEOTIDE SEQUENCE [LARGE SCALE GENOMIC DNA]</scope>
    <source>
        <strain>ATCC 24698 / 74-OR23-1A / CBS 708.71 / DSM 1257 / FGSC 987</strain>
    </source>
</reference>
<reference key="4">
    <citation type="submission" date="1995-09" db="EMBL/GenBank/DDBJ databases">
        <title>Structural analysis of ras genes from filamentous fungi.</title>
        <authorList>
            <person name="Lee C.-W."/>
            <person name="Lee E.J."/>
        </authorList>
    </citation>
    <scope>NUCLEOTIDE SEQUENCE [GENOMIC DNA] OF 43-70</scope>
    <source>
        <tissue>Mycelium</tissue>
    </source>
</reference>
<dbReference type="EC" id="3.6.5.2" evidence="2"/>
<dbReference type="EMBL" id="X53533">
    <property type="protein sequence ID" value="CAA37612.1"/>
    <property type="molecule type" value="mRNA"/>
</dbReference>
<dbReference type="EMBL" id="AB016991">
    <property type="protein sequence ID" value="BAA32498.1"/>
    <property type="molecule type" value="Genomic_DNA"/>
</dbReference>
<dbReference type="EMBL" id="CM002239">
    <property type="protein sequence ID" value="EAA32627.2"/>
    <property type="molecule type" value="Genomic_DNA"/>
</dbReference>
<dbReference type="EMBL" id="U33746">
    <property type="protein sequence ID" value="AAA74986.1"/>
    <property type="molecule type" value="Genomic_DNA"/>
</dbReference>
<dbReference type="PIR" id="S12892">
    <property type="entry name" value="S12892"/>
</dbReference>
<dbReference type="PIR" id="T47196">
    <property type="entry name" value="T47196"/>
</dbReference>
<dbReference type="RefSeq" id="XP_961863.2">
    <property type="nucleotide sequence ID" value="XM_956770.3"/>
</dbReference>
<dbReference type="SMR" id="P22126"/>
<dbReference type="FunCoup" id="P22126">
    <property type="interactions" value="464"/>
</dbReference>
<dbReference type="STRING" id="367110.P22126"/>
<dbReference type="PaxDb" id="5141-EFNCRP00000008765"/>
<dbReference type="EnsemblFungi" id="EAA32627">
    <property type="protein sequence ID" value="EAA32627"/>
    <property type="gene ID" value="NCU08823"/>
</dbReference>
<dbReference type="GeneID" id="3878011"/>
<dbReference type="KEGG" id="ncr:NCU08823"/>
<dbReference type="VEuPathDB" id="FungiDB:NCU08823"/>
<dbReference type="HOGENOM" id="CLU_041217_9_8_1"/>
<dbReference type="InParanoid" id="P22126"/>
<dbReference type="OMA" id="CCGGCVI"/>
<dbReference type="OrthoDB" id="5976022at2759"/>
<dbReference type="Proteomes" id="UP000001805">
    <property type="component" value="Chromosome 4, Linkage Group IV"/>
</dbReference>
<dbReference type="GO" id="GO:0005886">
    <property type="term" value="C:plasma membrane"/>
    <property type="evidence" value="ECO:0000318"/>
    <property type="project" value="GO_Central"/>
</dbReference>
<dbReference type="GO" id="GO:0003925">
    <property type="term" value="F:G protein activity"/>
    <property type="evidence" value="ECO:0007669"/>
    <property type="project" value="UniProtKB-EC"/>
</dbReference>
<dbReference type="GO" id="GO:0019003">
    <property type="term" value="F:GDP binding"/>
    <property type="evidence" value="ECO:0000318"/>
    <property type="project" value="GO_Central"/>
</dbReference>
<dbReference type="GO" id="GO:0005525">
    <property type="term" value="F:GTP binding"/>
    <property type="evidence" value="ECO:0000318"/>
    <property type="project" value="GO_Central"/>
</dbReference>
<dbReference type="GO" id="GO:0003924">
    <property type="term" value="F:GTPase activity"/>
    <property type="evidence" value="ECO:0000318"/>
    <property type="project" value="GO_Central"/>
</dbReference>
<dbReference type="GO" id="GO:0007165">
    <property type="term" value="P:signal transduction"/>
    <property type="evidence" value="ECO:0007669"/>
    <property type="project" value="InterPro"/>
</dbReference>
<dbReference type="CDD" id="cd04138">
    <property type="entry name" value="H_N_K_Ras_like"/>
    <property type="match status" value="1"/>
</dbReference>
<dbReference type="FunFam" id="3.40.50.300:FF:000080">
    <property type="entry name" value="Ras-like GTPase Ras1"/>
    <property type="match status" value="1"/>
</dbReference>
<dbReference type="Gene3D" id="3.40.50.300">
    <property type="entry name" value="P-loop containing nucleotide triphosphate hydrolases"/>
    <property type="match status" value="1"/>
</dbReference>
<dbReference type="InterPro" id="IPR027417">
    <property type="entry name" value="P-loop_NTPase"/>
</dbReference>
<dbReference type="InterPro" id="IPR005225">
    <property type="entry name" value="Small_GTP-bd"/>
</dbReference>
<dbReference type="InterPro" id="IPR001806">
    <property type="entry name" value="Small_GTPase"/>
</dbReference>
<dbReference type="InterPro" id="IPR020849">
    <property type="entry name" value="Small_GTPase_Ras-type"/>
</dbReference>
<dbReference type="NCBIfam" id="TIGR00231">
    <property type="entry name" value="small_GTP"/>
    <property type="match status" value="1"/>
</dbReference>
<dbReference type="PANTHER" id="PTHR24070">
    <property type="entry name" value="RAS, DI-RAS, AND RHEB FAMILY MEMBERS OF SMALL GTPASE SUPERFAMILY"/>
    <property type="match status" value="1"/>
</dbReference>
<dbReference type="Pfam" id="PF00071">
    <property type="entry name" value="Ras"/>
    <property type="match status" value="1"/>
</dbReference>
<dbReference type="PRINTS" id="PR00449">
    <property type="entry name" value="RASTRNSFRMNG"/>
</dbReference>
<dbReference type="SMART" id="SM00175">
    <property type="entry name" value="RAB"/>
    <property type="match status" value="1"/>
</dbReference>
<dbReference type="SMART" id="SM00176">
    <property type="entry name" value="RAN"/>
    <property type="match status" value="1"/>
</dbReference>
<dbReference type="SMART" id="SM00173">
    <property type="entry name" value="RAS"/>
    <property type="match status" value="1"/>
</dbReference>
<dbReference type="SMART" id="SM00174">
    <property type="entry name" value="RHO"/>
    <property type="match status" value="1"/>
</dbReference>
<dbReference type="SUPFAM" id="SSF52540">
    <property type="entry name" value="P-loop containing nucleoside triphosphate hydrolases"/>
    <property type="match status" value="1"/>
</dbReference>
<dbReference type="PROSITE" id="PS51421">
    <property type="entry name" value="RAS"/>
    <property type="match status" value="1"/>
</dbReference>
<gene>
    <name type="primary">ras-1</name>
    <name type="synonym">ras</name>
    <name type="ORF">NCU08823</name>
</gene>
<sequence>MANKFTREYKLVVVGGGGVGKSCLTIQLIQGHFLDEYDPTIEDSYRKQCTIDNEVALLDILDTAGQEEYSAMREQYMRTGEGFLLVFAINSRESFEEIRIYQQQILRVKDRDSFPMIIVGNKYDLRGERVVSEQEGQALAAEFGTKYIETSAKTQHNVENAFYDLVREIRKEDKKLGEKVGGTSFANNNGAVKQMDVGDEDVQAGCCAKCIMM</sequence>
<protein>
    <recommendedName>
        <fullName>Protein ras-1</fullName>
        <ecNumber evidence="2">3.6.5.2</ecNumber>
    </recommendedName>
</protein>
<organism>
    <name type="scientific">Neurospora crassa (strain ATCC 24698 / 74-OR23-1A / CBS 708.71 / DSM 1257 / FGSC 987)</name>
    <dbReference type="NCBI Taxonomy" id="367110"/>
    <lineage>
        <taxon>Eukaryota</taxon>
        <taxon>Fungi</taxon>
        <taxon>Dikarya</taxon>
        <taxon>Ascomycota</taxon>
        <taxon>Pezizomycotina</taxon>
        <taxon>Sordariomycetes</taxon>
        <taxon>Sordariomycetidae</taxon>
        <taxon>Sordariales</taxon>
        <taxon>Sordariaceae</taxon>
        <taxon>Neurospora</taxon>
    </lineage>
</organism>